<accession>Q9DAG9</accession>
<accession>Q6PG81</accession>
<keyword id="KW-0002">3D-structure</keyword>
<keyword id="KW-0025">Alternative splicing</keyword>
<keyword id="KW-0479">Metal-binding</keyword>
<keyword id="KW-0539">Nucleus</keyword>
<keyword id="KW-1185">Reference proteome</keyword>
<keyword id="KW-0808">Transferase</keyword>
<keyword id="KW-0833">Ubl conjugation pathway</keyword>
<keyword id="KW-0862">Zinc</keyword>
<keyword id="KW-0863">Zinc-finger</keyword>
<sequence>MKTLKEKNKHPRLRKTIRTKKVTQRKLSSSPVCLLCLQEPGDPEKLGEFLQKDNLCVHYFCLILSSRLPQKGQPNRGLHGFMPEDIKREAVRASKKICFVCKKKGAAIRCQNDQCVQNFHLPCGQERGCLSQFFGEYKSYCRKHRPTQNIHQGSLGEESCVLCCENLSRTSVENIQSPCCSQAIYHRKCIQKYAHTSAKHFFKCPQCNNREEFPQEMLRMGIHIPDRDAAWELEPGAFSELYQRYRHCDAPICLYEQGRDSFEDEGRWRLILCATCGSHGTHRDCSSLRPNSKKWECNECLPASTTS</sequence>
<evidence type="ECO:0000250" key="1">
    <source>
        <dbReference type="UniProtKB" id="Q9BWX1"/>
    </source>
</evidence>
<evidence type="ECO:0000255" key="2">
    <source>
        <dbReference type="PROSITE-ProRule" id="PRU01146"/>
    </source>
</evidence>
<evidence type="ECO:0000269" key="3">
    <source>
    </source>
</evidence>
<evidence type="ECO:0000269" key="4">
    <source>
    </source>
</evidence>
<evidence type="ECO:0000269" key="5">
    <source>
    </source>
</evidence>
<evidence type="ECO:0000269" key="6">
    <source>
    </source>
</evidence>
<evidence type="ECO:0000269" key="7">
    <source>
    </source>
</evidence>
<evidence type="ECO:0000303" key="8">
    <source>
    </source>
</evidence>
<evidence type="ECO:0000305" key="9"/>
<evidence type="ECO:0000312" key="10">
    <source>
        <dbReference type="MGI" id="MGI:1919088"/>
    </source>
</evidence>
<evidence type="ECO:0007744" key="11">
    <source>
        <dbReference type="PDB" id="1WEQ"/>
    </source>
</evidence>
<evidence type="ECO:0007744" key="12">
    <source>
        <dbReference type="PDB" id="8JWJ"/>
    </source>
</evidence>
<evidence type="ECO:0007744" key="13">
    <source>
        <dbReference type="PDB" id="8JWS"/>
    </source>
</evidence>
<evidence type="ECO:0007744" key="14">
    <source>
        <dbReference type="PDB" id="8JWU"/>
    </source>
</evidence>
<evidence type="ECO:0007829" key="15">
    <source>
        <dbReference type="PDB" id="1WEQ"/>
    </source>
</evidence>
<evidence type="ECO:0007829" key="16">
    <source>
        <dbReference type="PDB" id="8JWJ"/>
    </source>
</evidence>
<evidence type="ECO:0007829" key="17">
    <source>
        <dbReference type="PDB" id="8JWS"/>
    </source>
</evidence>
<gene>
    <name evidence="10" type="primary">Phf7</name>
</gene>
<reference key="1">
    <citation type="journal article" date="2005" name="Science">
        <title>The transcriptional landscape of the mammalian genome.</title>
        <authorList>
            <person name="Carninci P."/>
            <person name="Kasukawa T."/>
            <person name="Katayama S."/>
            <person name="Gough J."/>
            <person name="Frith M.C."/>
            <person name="Maeda N."/>
            <person name="Oyama R."/>
            <person name="Ravasi T."/>
            <person name="Lenhard B."/>
            <person name="Wells C."/>
            <person name="Kodzius R."/>
            <person name="Shimokawa K."/>
            <person name="Bajic V.B."/>
            <person name="Brenner S.E."/>
            <person name="Batalov S."/>
            <person name="Forrest A.R."/>
            <person name="Zavolan M."/>
            <person name="Davis M.J."/>
            <person name="Wilming L.G."/>
            <person name="Aidinis V."/>
            <person name="Allen J.E."/>
            <person name="Ambesi-Impiombato A."/>
            <person name="Apweiler R."/>
            <person name="Aturaliya R.N."/>
            <person name="Bailey T.L."/>
            <person name="Bansal M."/>
            <person name="Baxter L."/>
            <person name="Beisel K.W."/>
            <person name="Bersano T."/>
            <person name="Bono H."/>
            <person name="Chalk A.M."/>
            <person name="Chiu K.P."/>
            <person name="Choudhary V."/>
            <person name="Christoffels A."/>
            <person name="Clutterbuck D.R."/>
            <person name="Crowe M.L."/>
            <person name="Dalla E."/>
            <person name="Dalrymple B.P."/>
            <person name="de Bono B."/>
            <person name="Della Gatta G."/>
            <person name="di Bernardo D."/>
            <person name="Down T."/>
            <person name="Engstrom P."/>
            <person name="Fagiolini M."/>
            <person name="Faulkner G."/>
            <person name="Fletcher C.F."/>
            <person name="Fukushima T."/>
            <person name="Furuno M."/>
            <person name="Futaki S."/>
            <person name="Gariboldi M."/>
            <person name="Georgii-Hemming P."/>
            <person name="Gingeras T.R."/>
            <person name="Gojobori T."/>
            <person name="Green R.E."/>
            <person name="Gustincich S."/>
            <person name="Harbers M."/>
            <person name="Hayashi Y."/>
            <person name="Hensch T.K."/>
            <person name="Hirokawa N."/>
            <person name="Hill D."/>
            <person name="Huminiecki L."/>
            <person name="Iacono M."/>
            <person name="Ikeo K."/>
            <person name="Iwama A."/>
            <person name="Ishikawa T."/>
            <person name="Jakt M."/>
            <person name="Kanapin A."/>
            <person name="Katoh M."/>
            <person name="Kawasawa Y."/>
            <person name="Kelso J."/>
            <person name="Kitamura H."/>
            <person name="Kitano H."/>
            <person name="Kollias G."/>
            <person name="Krishnan S.P."/>
            <person name="Kruger A."/>
            <person name="Kummerfeld S.K."/>
            <person name="Kurochkin I.V."/>
            <person name="Lareau L.F."/>
            <person name="Lazarevic D."/>
            <person name="Lipovich L."/>
            <person name="Liu J."/>
            <person name="Liuni S."/>
            <person name="McWilliam S."/>
            <person name="Madan Babu M."/>
            <person name="Madera M."/>
            <person name="Marchionni L."/>
            <person name="Matsuda H."/>
            <person name="Matsuzawa S."/>
            <person name="Miki H."/>
            <person name="Mignone F."/>
            <person name="Miyake S."/>
            <person name="Morris K."/>
            <person name="Mottagui-Tabar S."/>
            <person name="Mulder N."/>
            <person name="Nakano N."/>
            <person name="Nakauchi H."/>
            <person name="Ng P."/>
            <person name="Nilsson R."/>
            <person name="Nishiguchi S."/>
            <person name="Nishikawa S."/>
            <person name="Nori F."/>
            <person name="Ohara O."/>
            <person name="Okazaki Y."/>
            <person name="Orlando V."/>
            <person name="Pang K.C."/>
            <person name="Pavan W.J."/>
            <person name="Pavesi G."/>
            <person name="Pesole G."/>
            <person name="Petrovsky N."/>
            <person name="Piazza S."/>
            <person name="Reed J."/>
            <person name="Reid J.F."/>
            <person name="Ring B.Z."/>
            <person name="Ringwald M."/>
            <person name="Rost B."/>
            <person name="Ruan Y."/>
            <person name="Salzberg S.L."/>
            <person name="Sandelin A."/>
            <person name="Schneider C."/>
            <person name="Schoenbach C."/>
            <person name="Sekiguchi K."/>
            <person name="Semple C.A."/>
            <person name="Seno S."/>
            <person name="Sessa L."/>
            <person name="Sheng Y."/>
            <person name="Shibata Y."/>
            <person name="Shimada H."/>
            <person name="Shimada K."/>
            <person name="Silva D."/>
            <person name="Sinclair B."/>
            <person name="Sperling S."/>
            <person name="Stupka E."/>
            <person name="Sugiura K."/>
            <person name="Sultana R."/>
            <person name="Takenaka Y."/>
            <person name="Taki K."/>
            <person name="Tammoja K."/>
            <person name="Tan S.L."/>
            <person name="Tang S."/>
            <person name="Taylor M.S."/>
            <person name="Tegner J."/>
            <person name="Teichmann S.A."/>
            <person name="Ueda H.R."/>
            <person name="van Nimwegen E."/>
            <person name="Verardo R."/>
            <person name="Wei C.L."/>
            <person name="Yagi K."/>
            <person name="Yamanishi H."/>
            <person name="Zabarovsky E."/>
            <person name="Zhu S."/>
            <person name="Zimmer A."/>
            <person name="Hide W."/>
            <person name="Bult C."/>
            <person name="Grimmond S.M."/>
            <person name="Teasdale R.D."/>
            <person name="Liu E.T."/>
            <person name="Brusic V."/>
            <person name="Quackenbush J."/>
            <person name="Wahlestedt C."/>
            <person name="Mattick J.S."/>
            <person name="Hume D.A."/>
            <person name="Kai C."/>
            <person name="Sasaki D."/>
            <person name="Tomaru Y."/>
            <person name="Fukuda S."/>
            <person name="Kanamori-Katayama M."/>
            <person name="Suzuki M."/>
            <person name="Aoki J."/>
            <person name="Arakawa T."/>
            <person name="Iida J."/>
            <person name="Imamura K."/>
            <person name="Itoh M."/>
            <person name="Kato T."/>
            <person name="Kawaji H."/>
            <person name="Kawagashira N."/>
            <person name="Kawashima T."/>
            <person name="Kojima M."/>
            <person name="Kondo S."/>
            <person name="Konno H."/>
            <person name="Nakano K."/>
            <person name="Ninomiya N."/>
            <person name="Nishio T."/>
            <person name="Okada M."/>
            <person name="Plessy C."/>
            <person name="Shibata K."/>
            <person name="Shiraki T."/>
            <person name="Suzuki S."/>
            <person name="Tagami M."/>
            <person name="Waki K."/>
            <person name="Watahiki A."/>
            <person name="Okamura-Oho Y."/>
            <person name="Suzuki H."/>
            <person name="Kawai J."/>
            <person name="Hayashizaki Y."/>
        </authorList>
    </citation>
    <scope>NUCLEOTIDE SEQUENCE [LARGE SCALE MRNA] (ISOFORM 1)</scope>
    <source>
        <strain>C57BL/6J</strain>
        <tissue>Testis</tissue>
    </source>
</reference>
<reference key="2">
    <citation type="journal article" date="2004" name="Genome Res.">
        <title>The status, quality, and expansion of the NIH full-length cDNA project: the Mammalian Gene Collection (MGC).</title>
        <authorList>
            <consortium name="The MGC Project Team"/>
        </authorList>
    </citation>
    <scope>NUCLEOTIDE SEQUENCE [LARGE SCALE MRNA] (ISOFORM 2)</scope>
    <source>
        <strain>FVB/N-3</strain>
        <tissue>Mammary gland</tissue>
    </source>
</reference>
<reference key="3">
    <citation type="journal article" date="2002" name="Biochem. Biophys. Res. Commun.">
        <title>NYD-SP6, a novel gene potentially involved in regulating testicular development/spermatogenesis.</title>
        <authorList>
            <person name="Xiao J."/>
            <person name="Xu M."/>
            <person name="Li J."/>
            <person name="Chang Chan H."/>
            <person name="Lin M."/>
            <person name="Zhu H."/>
            <person name="Zhang W."/>
            <person name="Zhou Z."/>
            <person name="Zhao B."/>
            <person name="Sha J.H."/>
        </authorList>
    </citation>
    <scope>DEVELOPMENTAL STAGE</scope>
    <scope>TISSUE SPECIFICITY</scope>
    <source>
        <tissue>Testis</tissue>
    </source>
</reference>
<reference key="4">
    <citation type="journal article" date="2020" name="Cell Rep.">
        <title>PHF7 Modulates BRDT Stability and Histone-to-Protamine Exchange during Spermiogenesis.</title>
        <authorList>
            <person name="Kim C.R."/>
            <person name="Noda T."/>
            <person name="Kim H."/>
            <person name="Kim G."/>
            <person name="Park S."/>
            <person name="Na Y."/>
            <person name="Oura S."/>
            <person name="Shimada K."/>
            <person name="Bang I."/>
            <person name="Ahn J.Y."/>
            <person name="Kim Y.R."/>
            <person name="Oh S.K."/>
            <person name="Choi H.J."/>
            <person name="Kim J.S."/>
            <person name="Jung I."/>
            <person name="Lee H."/>
            <person name="Okada Y."/>
            <person name="Ikawa M."/>
            <person name="Baek S.H."/>
        </authorList>
    </citation>
    <scope>FUNCTION</scope>
    <scope>CATALYTIC ACTIVITY</scope>
    <scope>PATHWAY</scope>
    <scope>DEVELOPMENTAL STAGE</scope>
    <scope>DISRUPTION PHENOTYPE</scope>
    <scope>MUTAGENESIS OF CYS-160</scope>
</reference>
<reference key="5">
    <citation type="journal article" date="2021" name="Nat. Cell Biol.">
        <title>The histone reader PHF7 cooperates with the SWI/SNF complex at cardiac super enhancers to promote direct reprogramming.</title>
        <authorList>
            <person name="Garry G.A."/>
            <person name="Bezprozvannaya S."/>
            <person name="Chen K."/>
            <person name="Zhou H."/>
            <person name="Hashimoto H."/>
            <person name="Morales M.G."/>
            <person name="Liu N."/>
            <person name="Bassel-Duby R."/>
            <person name="Olson E.N."/>
        </authorList>
    </citation>
    <scope>FUNCTION</scope>
    <scope>INTERACTION WITH GATA4 AND MEF2C</scope>
    <scope>DEVELOPMENTAL STAGE</scope>
</reference>
<reference key="6">
    <citation type="journal article" date="2024" name="Biochem. Biophys. Res. Commun.">
        <title>Phf7 has impacts on the body growth and bone remodeling by regulating testicular hormones in male mice.</title>
        <authorList>
            <person name="Kim J.E."/>
            <person name="Park S.G."/>
            <person name="Ka D.B."/>
            <person name="Kim E.K."/>
            <person name="Cho S.M."/>
            <person name="Kim H.R."/>
            <person name="Lee M.N."/>
            <person name="Choi K.C."/>
            <person name="Yoon W.K."/>
            <person name="Nam K.H."/>
        </authorList>
    </citation>
    <scope>FUNCTION</scope>
    <scope>TISSUE SPECIFICITY</scope>
    <scope>DISRUPTION PHENOTYPE</scope>
</reference>
<reference evidence="11" key="7">
    <citation type="submission" date="2004-11" db="PDB data bank">
        <title>Solution structure of PHD domain in PHD finger protein 7.</title>
        <authorList>
            <consortium name="RIKEN structural genomics initiative (RSGI)"/>
        </authorList>
    </citation>
    <scope>STRUCTURE BY NMR OF 232-304</scope>
</reference>
<reference evidence="12 13 14" key="8">
    <citation type="journal article" date="2023" name="Genes Dev.">
        <title>Molecular basis for PHF7-mediated ubiquitination of histone H3.</title>
        <authorList>
            <person name="Lee H.S."/>
            <person name="Bang I."/>
            <person name="You J."/>
            <person name="Jeong T.K."/>
            <person name="Kim C.R."/>
            <person name="Hwang M."/>
            <person name="Kim J.S."/>
            <person name="Baek S.H."/>
            <person name="Song J.J."/>
            <person name="Choi H.J."/>
        </authorList>
    </citation>
    <scope>X-RAY CRYSTALLOGRAPHY (2.00 ANGSTROMS) OF 28-307 IN COMPLEX WITH HUMAN UBE2D2 AND ZN(2+)</scope>
    <scope>FUNCTION</scope>
    <scope>CATALYTIC ACTIVITY</scope>
    <scope>INTERACTION WITH UBE2D2</scope>
    <scope>DOMAIN</scope>
    <scope>MUTAGENESIS OF GLU-44; ARG-67; LYS-71; ARG-76; LYS-87; ARG-88; ARG-92; GLN-148; SER-181; GLN-206; ASN-208; TRP-231; GLU-232; PHE-238; TYR-242; TYR-245; PHE-262 AND LEU-270</scope>
</reference>
<name>PHF7_MOUSE</name>
<dbReference type="EC" id="2.3.2.27" evidence="4 6"/>
<dbReference type="EMBL" id="AK005852">
    <property type="protein sequence ID" value="BAB24275.1"/>
    <property type="molecule type" value="mRNA"/>
</dbReference>
<dbReference type="EMBL" id="BC057174">
    <property type="protein sequence ID" value="AAH57174.1"/>
    <property type="molecule type" value="mRNA"/>
</dbReference>
<dbReference type="CCDS" id="CCDS26909.1">
    <molecule id="Q9DAG9-1"/>
</dbReference>
<dbReference type="CCDS" id="CCDS88616.1">
    <molecule id="Q9DAG9-2"/>
</dbReference>
<dbReference type="RefSeq" id="NP_001347553.1">
    <molecule id="Q9DAG9-2"/>
    <property type="nucleotide sequence ID" value="NM_001360624.1"/>
</dbReference>
<dbReference type="RefSeq" id="NP_082225.1">
    <molecule id="Q9DAG9-1"/>
    <property type="nucleotide sequence ID" value="NM_027949.2"/>
</dbReference>
<dbReference type="RefSeq" id="XP_006519646.1">
    <property type="nucleotide sequence ID" value="XM_006519583.3"/>
</dbReference>
<dbReference type="PDB" id="1WEQ">
    <property type="method" value="NMR"/>
    <property type="chains" value="A=232-303"/>
</dbReference>
<dbReference type="PDB" id="8JWJ">
    <property type="method" value="X-ray"/>
    <property type="resolution" value="2.96 A"/>
    <property type="chains" value="A/C=28-307"/>
</dbReference>
<dbReference type="PDB" id="8JWS">
    <property type="method" value="X-ray"/>
    <property type="resolution" value="2.00 A"/>
    <property type="chains" value="A/B/C=28-149"/>
</dbReference>
<dbReference type="PDB" id="8JWU">
    <property type="method" value="X-ray"/>
    <property type="resolution" value="3.58 A"/>
    <property type="chains" value="A/B/C=28-307"/>
</dbReference>
<dbReference type="PDBsum" id="1WEQ"/>
<dbReference type="PDBsum" id="8JWJ"/>
<dbReference type="PDBsum" id="8JWS"/>
<dbReference type="PDBsum" id="8JWU"/>
<dbReference type="SMR" id="Q9DAG9"/>
<dbReference type="FunCoup" id="Q9DAG9">
    <property type="interactions" value="1038"/>
</dbReference>
<dbReference type="IntAct" id="Q9DAG9">
    <property type="interactions" value="1"/>
</dbReference>
<dbReference type="STRING" id="10090.ENSMUSP00000022459"/>
<dbReference type="PhosphoSitePlus" id="Q9DAG9"/>
<dbReference type="PaxDb" id="10090-ENSMUSP00000022459"/>
<dbReference type="ProteomicsDB" id="287704">
    <molecule id="Q9DAG9-1"/>
</dbReference>
<dbReference type="ProteomicsDB" id="287705">
    <molecule id="Q9DAG9-2"/>
</dbReference>
<dbReference type="Antibodypedia" id="31216">
    <property type="antibodies" value="259 antibodies from 20 providers"/>
</dbReference>
<dbReference type="DNASU" id="71838"/>
<dbReference type="Ensembl" id="ENSMUST00000022459.5">
    <molecule id="Q9DAG9-1"/>
    <property type="protein sequence ID" value="ENSMUSP00000022459.4"/>
    <property type="gene ID" value="ENSMUSG00000021902.8"/>
</dbReference>
<dbReference type="Ensembl" id="ENSMUST00000226565.2">
    <molecule id="Q9DAG9-2"/>
    <property type="protein sequence ID" value="ENSMUSP00000154095.2"/>
    <property type="gene ID" value="ENSMUSG00000021902.8"/>
</dbReference>
<dbReference type="GeneID" id="71838"/>
<dbReference type="KEGG" id="mmu:71838"/>
<dbReference type="UCSC" id="uc007sxf.1">
    <molecule id="Q9DAG9-1"/>
    <property type="organism name" value="mouse"/>
</dbReference>
<dbReference type="UCSC" id="uc007sxg.1">
    <molecule id="Q9DAG9-2"/>
    <property type="organism name" value="mouse"/>
</dbReference>
<dbReference type="AGR" id="MGI:1919088"/>
<dbReference type="CTD" id="51533"/>
<dbReference type="MGI" id="MGI:1919088">
    <property type="gene designation" value="Phf7"/>
</dbReference>
<dbReference type="VEuPathDB" id="HostDB:ENSMUSG00000021902"/>
<dbReference type="eggNOG" id="KOG1084">
    <property type="taxonomic scope" value="Eukaryota"/>
</dbReference>
<dbReference type="GeneTree" id="ENSGT00950000182865"/>
<dbReference type="HOGENOM" id="CLU_055746_0_1_1"/>
<dbReference type="InParanoid" id="Q9DAG9"/>
<dbReference type="OMA" id="NNRDEFP"/>
<dbReference type="OrthoDB" id="512616at2759"/>
<dbReference type="PhylomeDB" id="Q9DAG9"/>
<dbReference type="TreeFam" id="TF325426"/>
<dbReference type="UniPathway" id="UPA00143"/>
<dbReference type="BioGRID-ORCS" id="71838">
    <property type="hits" value="3 hits in 81 CRISPR screens"/>
</dbReference>
<dbReference type="ChiTaRS" id="Phf7">
    <property type="organism name" value="mouse"/>
</dbReference>
<dbReference type="EvolutionaryTrace" id="Q9DAG9"/>
<dbReference type="PRO" id="PR:Q9DAG9"/>
<dbReference type="Proteomes" id="UP000000589">
    <property type="component" value="Chromosome 14"/>
</dbReference>
<dbReference type="RNAct" id="Q9DAG9">
    <property type="molecule type" value="protein"/>
</dbReference>
<dbReference type="Bgee" id="ENSMUSG00000021902">
    <property type="expression patterns" value="Expressed in seminiferous tubule of testis and 254 other cell types or tissues"/>
</dbReference>
<dbReference type="ExpressionAtlas" id="Q9DAG9">
    <property type="expression patterns" value="baseline and differential"/>
</dbReference>
<dbReference type="GO" id="GO:0005829">
    <property type="term" value="C:cytosol"/>
    <property type="evidence" value="ECO:0007669"/>
    <property type="project" value="Ensembl"/>
</dbReference>
<dbReference type="GO" id="GO:0005794">
    <property type="term" value="C:Golgi apparatus"/>
    <property type="evidence" value="ECO:0007669"/>
    <property type="project" value="Ensembl"/>
</dbReference>
<dbReference type="GO" id="GO:0016607">
    <property type="term" value="C:nuclear speck"/>
    <property type="evidence" value="ECO:0007669"/>
    <property type="project" value="Ensembl"/>
</dbReference>
<dbReference type="GO" id="GO:0005886">
    <property type="term" value="C:plasma membrane"/>
    <property type="evidence" value="ECO:0007669"/>
    <property type="project" value="Ensembl"/>
</dbReference>
<dbReference type="GO" id="GO:0008270">
    <property type="term" value="F:zinc ion binding"/>
    <property type="evidence" value="ECO:0007669"/>
    <property type="project" value="UniProtKB-KW"/>
</dbReference>
<dbReference type="GO" id="GO:0090291">
    <property type="term" value="P:negative regulation of osteoclast proliferation"/>
    <property type="evidence" value="ECO:0000315"/>
    <property type="project" value="UniProtKB"/>
</dbReference>
<dbReference type="CDD" id="cd15669">
    <property type="entry name" value="ePHD_PHF7_G2E3_like"/>
    <property type="match status" value="1"/>
</dbReference>
<dbReference type="CDD" id="cd15496">
    <property type="entry name" value="PHD_PHF7_G2E3_like"/>
    <property type="match status" value="1"/>
</dbReference>
<dbReference type="FunFam" id="3.30.40.10:FF:000132">
    <property type="entry name" value="G2/M phase-specific E3 ubiquitin-protein ligase"/>
    <property type="match status" value="1"/>
</dbReference>
<dbReference type="FunFam" id="3.30.40.10:FF:000443">
    <property type="entry name" value="PHD finger protein 7 isoform 1"/>
    <property type="match status" value="1"/>
</dbReference>
<dbReference type="Gene3D" id="3.30.40.10">
    <property type="entry name" value="Zinc/RING finger domain, C3HC4 (zinc finger)"/>
    <property type="match status" value="2"/>
</dbReference>
<dbReference type="InterPro" id="IPR034732">
    <property type="entry name" value="EPHD"/>
</dbReference>
<dbReference type="InterPro" id="IPR051188">
    <property type="entry name" value="PHD-type_Zinc_Finger"/>
</dbReference>
<dbReference type="InterPro" id="IPR042013">
    <property type="entry name" value="PHF7/G2E3_ePHD"/>
</dbReference>
<dbReference type="InterPro" id="IPR042012">
    <property type="entry name" value="PHF7/G2E3_PHD"/>
</dbReference>
<dbReference type="InterPro" id="IPR011011">
    <property type="entry name" value="Znf_FYVE_PHD"/>
</dbReference>
<dbReference type="InterPro" id="IPR001965">
    <property type="entry name" value="Znf_PHD"/>
</dbReference>
<dbReference type="InterPro" id="IPR001841">
    <property type="entry name" value="Znf_RING"/>
</dbReference>
<dbReference type="InterPro" id="IPR013083">
    <property type="entry name" value="Znf_RING/FYVE/PHD"/>
</dbReference>
<dbReference type="PANTHER" id="PTHR12420">
    <property type="entry name" value="PHD FINGER PROTEIN"/>
    <property type="match status" value="1"/>
</dbReference>
<dbReference type="PANTHER" id="PTHR12420:SF47">
    <property type="entry name" value="PHD FINGER PROTEIN 7"/>
    <property type="match status" value="1"/>
</dbReference>
<dbReference type="Pfam" id="PF13771">
    <property type="entry name" value="zf-HC5HC2H"/>
    <property type="match status" value="1"/>
</dbReference>
<dbReference type="SMART" id="SM00249">
    <property type="entry name" value="PHD"/>
    <property type="match status" value="2"/>
</dbReference>
<dbReference type="SUPFAM" id="SSF57903">
    <property type="entry name" value="FYVE/PHD zinc finger"/>
    <property type="match status" value="1"/>
</dbReference>
<dbReference type="PROSITE" id="PS51805">
    <property type="entry name" value="EPHD"/>
    <property type="match status" value="1"/>
</dbReference>
<protein>
    <recommendedName>
        <fullName evidence="9">E3 ubiquitin-protein ligase PHF7</fullName>
        <ecNumber evidence="4 6">2.3.2.27</ecNumber>
    </recommendedName>
    <alternativeName>
        <fullName evidence="10">PHD finger protein 7</fullName>
    </alternativeName>
    <alternativeName>
        <fullName>Testis development protein NYD-SP6</fullName>
    </alternativeName>
</protein>
<organism>
    <name type="scientific">Mus musculus</name>
    <name type="common">Mouse</name>
    <dbReference type="NCBI Taxonomy" id="10090"/>
    <lineage>
        <taxon>Eukaryota</taxon>
        <taxon>Metazoa</taxon>
        <taxon>Chordata</taxon>
        <taxon>Craniata</taxon>
        <taxon>Vertebrata</taxon>
        <taxon>Euteleostomi</taxon>
        <taxon>Mammalia</taxon>
        <taxon>Eutheria</taxon>
        <taxon>Euarchontoglires</taxon>
        <taxon>Glires</taxon>
        <taxon>Rodentia</taxon>
        <taxon>Myomorpha</taxon>
        <taxon>Muroidea</taxon>
        <taxon>Muridae</taxon>
        <taxon>Murinae</taxon>
        <taxon>Mus</taxon>
        <taxon>Mus</taxon>
    </lineage>
</organism>
<feature type="chain" id="PRO_0000055997" description="E3 ubiquitin-protein ligase PHF7">
    <location>
        <begin position="1"/>
        <end position="307"/>
    </location>
</feature>
<feature type="zinc finger region" description="C2HC pre-PHD-type" evidence="2">
    <location>
        <begin position="30"/>
        <end position="68"/>
    </location>
</feature>
<feature type="zinc finger region" description="PHD-type" evidence="2">
    <location>
        <begin position="96"/>
        <end position="145"/>
    </location>
</feature>
<feature type="zinc finger region" description="RING-type; degenerate">
    <location>
        <begin position="160"/>
        <end position="208"/>
    </location>
</feature>
<feature type="region of interest" description="Required for interaction and ubiquitination of the nucleosome core particle" evidence="6">
    <location>
        <begin position="67"/>
        <end position="92"/>
    </location>
</feature>
<feature type="region of interest" description="Required for interaction with ubiquitinated UBE2D2" evidence="6">
    <location>
        <begin position="150"/>
        <end position="307"/>
    </location>
</feature>
<feature type="region of interest" description="Required for association with and ubiquitination of H3" evidence="6">
    <location>
        <begin position="244"/>
        <end position="301"/>
    </location>
</feature>
<feature type="binding site" evidence="12 13 14">
    <location>
        <position position="33"/>
    </location>
    <ligand>
        <name>Zn(2+)</name>
        <dbReference type="ChEBI" id="CHEBI:29105"/>
        <label>1</label>
    </ligand>
</feature>
<feature type="binding site" evidence="12 13 14">
    <location>
        <position position="36"/>
    </location>
    <ligand>
        <name>Zn(2+)</name>
        <dbReference type="ChEBI" id="CHEBI:29105"/>
        <label>1</label>
    </ligand>
</feature>
<feature type="binding site" evidence="12 13 14">
    <location>
        <position position="58"/>
    </location>
    <ligand>
        <name>Zn(2+)</name>
        <dbReference type="ChEBI" id="CHEBI:29105"/>
        <label>1</label>
    </ligand>
</feature>
<feature type="binding site" evidence="12 13 14">
    <location>
        <position position="61"/>
    </location>
    <ligand>
        <name>Zn(2+)</name>
        <dbReference type="ChEBI" id="CHEBI:29105"/>
        <label>1</label>
    </ligand>
</feature>
<feature type="binding site" evidence="12 13 14">
    <location>
        <position position="98"/>
    </location>
    <ligand>
        <name>Zn(2+)</name>
        <dbReference type="ChEBI" id="CHEBI:29105"/>
        <label>2</label>
    </ligand>
</feature>
<feature type="binding site" evidence="12 13 14">
    <location>
        <position position="101"/>
    </location>
    <ligand>
        <name>Zn(2+)</name>
        <dbReference type="ChEBI" id="CHEBI:29105"/>
        <label>2</label>
    </ligand>
</feature>
<feature type="binding site" evidence="12 13 14">
    <location>
        <position position="110"/>
    </location>
    <ligand>
        <name>Zn(2+)</name>
        <dbReference type="ChEBI" id="CHEBI:29105"/>
        <label>3</label>
    </ligand>
</feature>
<feature type="binding site" evidence="12 13 14">
    <location>
        <position position="115"/>
    </location>
    <ligand>
        <name>Zn(2+)</name>
        <dbReference type="ChEBI" id="CHEBI:29105"/>
        <label>3</label>
    </ligand>
</feature>
<feature type="binding site" evidence="12 13 14">
    <location>
        <position position="120"/>
    </location>
    <ligand>
        <name>Zn(2+)</name>
        <dbReference type="ChEBI" id="CHEBI:29105"/>
        <label>2</label>
    </ligand>
</feature>
<feature type="binding site" evidence="12 13 14">
    <location>
        <position position="123"/>
    </location>
    <ligand>
        <name>Zn(2+)</name>
        <dbReference type="ChEBI" id="CHEBI:29105"/>
        <label>2</label>
    </ligand>
</feature>
<feature type="binding site" evidence="12 13 14">
    <location>
        <position position="141"/>
    </location>
    <ligand>
        <name>Zn(2+)</name>
        <dbReference type="ChEBI" id="CHEBI:29105"/>
        <label>3</label>
    </ligand>
</feature>
<feature type="binding site" evidence="12 13 14">
    <location>
        <position position="144"/>
    </location>
    <ligand>
        <name>Zn(2+)</name>
        <dbReference type="ChEBI" id="CHEBI:29105"/>
        <label>3</label>
    </ligand>
</feature>
<feature type="binding site" evidence="12 14">
    <location>
        <position position="160"/>
    </location>
    <ligand>
        <name>Zn(2+)</name>
        <dbReference type="ChEBI" id="CHEBI:29105"/>
        <label>4</label>
    </ligand>
</feature>
<feature type="binding site" evidence="12 14">
    <location>
        <position position="163"/>
    </location>
    <ligand>
        <name>Zn(2+)</name>
        <dbReference type="ChEBI" id="CHEBI:29105"/>
        <label>4</label>
    </ligand>
</feature>
<feature type="binding site" evidence="12 14">
    <location>
        <position position="179"/>
    </location>
    <ligand>
        <name>Zn(2+)</name>
        <dbReference type="ChEBI" id="CHEBI:29105"/>
        <label>5</label>
    </ligand>
</feature>
<feature type="binding site" evidence="12 14">
    <location>
        <position position="180"/>
    </location>
    <ligand>
        <name>Zn(2+)</name>
        <dbReference type="ChEBI" id="CHEBI:29105"/>
        <label>5</label>
    </ligand>
</feature>
<feature type="binding site" evidence="12 14">
    <location>
        <position position="186"/>
    </location>
    <ligand>
        <name>Zn(2+)</name>
        <dbReference type="ChEBI" id="CHEBI:29105"/>
        <label>4</label>
    </ligand>
</feature>
<feature type="binding site" evidence="12 14">
    <location>
        <position position="189"/>
    </location>
    <ligand>
        <name>Zn(2+)</name>
        <dbReference type="ChEBI" id="CHEBI:29105"/>
        <label>4</label>
    </ligand>
</feature>
<feature type="binding site" evidence="12 14">
    <location>
        <position position="204"/>
    </location>
    <ligand>
        <name>Zn(2+)</name>
        <dbReference type="ChEBI" id="CHEBI:29105"/>
        <label>5</label>
    </ligand>
</feature>
<feature type="binding site" evidence="12 14">
    <location>
        <position position="207"/>
    </location>
    <ligand>
        <name>Zn(2+)</name>
        <dbReference type="ChEBI" id="CHEBI:29105"/>
        <label>5</label>
    </ligand>
</feature>
<feature type="binding site" evidence="12 14">
    <location>
        <position position="248"/>
    </location>
    <ligand>
        <name>Zn(2+)</name>
        <dbReference type="ChEBI" id="CHEBI:29105"/>
        <label>6</label>
    </ligand>
</feature>
<feature type="binding site" evidence="12 14">
    <location>
        <position position="253"/>
    </location>
    <ligand>
        <name>Zn(2+)</name>
        <dbReference type="ChEBI" id="CHEBI:29105"/>
        <label>6</label>
    </ligand>
</feature>
<feature type="binding site" evidence="12 14">
    <location>
        <position position="273"/>
    </location>
    <ligand>
        <name>Zn(2+)</name>
        <dbReference type="ChEBI" id="CHEBI:29105"/>
        <label>7</label>
    </ligand>
</feature>
<feature type="binding site" evidence="12 14">
    <location>
        <position position="276"/>
    </location>
    <ligand>
        <name>Zn(2+)</name>
        <dbReference type="ChEBI" id="CHEBI:29105"/>
        <label>7</label>
    </ligand>
</feature>
<feature type="binding site" evidence="12 14">
    <location>
        <position position="282"/>
    </location>
    <ligand>
        <name>Zn(2+)</name>
        <dbReference type="ChEBI" id="CHEBI:29105"/>
        <label>6</label>
    </ligand>
</feature>
<feature type="binding site" evidence="12 14">
    <location>
        <position position="285"/>
    </location>
    <ligand>
        <name>Zn(2+)</name>
        <dbReference type="ChEBI" id="CHEBI:29105"/>
        <label>6</label>
    </ligand>
</feature>
<feature type="binding site" evidence="12 14">
    <location>
        <position position="297"/>
    </location>
    <ligand>
        <name>Zn(2+)</name>
        <dbReference type="ChEBI" id="CHEBI:29105"/>
        <label>7</label>
    </ligand>
</feature>
<feature type="binding site" evidence="12 14">
    <location>
        <position position="300"/>
    </location>
    <ligand>
        <name>Zn(2+)</name>
        <dbReference type="ChEBI" id="CHEBI:29105"/>
        <label>7</label>
    </ligand>
</feature>
<feature type="site" description="Cleavage" evidence="6">
    <location>
        <begin position="149"/>
        <end position="150"/>
    </location>
</feature>
<feature type="splice variant" id="VSP_013491" description="In isoform 2." evidence="8">
    <location>
        <begin position="228"/>
        <end position="266"/>
    </location>
</feature>
<feature type="mutagenesis site" description="Reduces ubiquitination of histone H3." evidence="6">
    <original>E</original>
    <variation>K</variation>
    <location>
        <position position="44"/>
    </location>
</feature>
<feature type="mutagenesis site" description="Reduces interaction with and ubiquitination of the nucleosome core particle. No effect on ubiquitination of histone H3." evidence="6">
    <original>R</original>
    <variation>A</variation>
    <location>
        <position position="67"/>
    </location>
</feature>
<feature type="mutagenesis site" description="Reduces interaction with and ubiquitination of the nucleosome core particle. No effect on ubiquitination of histone H3." evidence="6">
    <original>K</original>
    <variation>S</variation>
    <location>
        <position position="71"/>
    </location>
</feature>
<feature type="mutagenesis site" description="Reduces interaction with and ubiquitination of the nucleosome core particle. No effect on ubiquitination of histone H3." evidence="6">
    <original>R</original>
    <variation>S</variation>
    <location>
        <position position="76"/>
    </location>
</feature>
<feature type="mutagenesis site" description="Abolishes interaction with and ubiquitination of the nucleosome core particle. No effect on ubiquitination of histone H3." evidence="6">
    <original>K</original>
    <variation>S</variation>
    <location>
        <position position="87"/>
    </location>
</feature>
<feature type="mutagenesis site" description="Abolishes interaction with and ubiquitination of the nucleosome core particle. No effect on ubiquitination of histone H3." evidence="6">
    <original>R</original>
    <variation>S</variation>
    <location>
        <position position="88"/>
    </location>
</feature>
<feature type="mutagenesis site" description="Abolishes interaction with and ubiquitination of the nucleosome core particle. No effect on ubiquitination of histone H3." evidence="6">
    <original>R</original>
    <variation>S</variation>
    <location>
        <position position="92"/>
    </location>
</feature>
<feature type="mutagenesis site" description="Reduces ubiquitination of histone H3." evidence="6">
    <original>Q</original>
    <variation>A</variation>
    <location>
        <position position="148"/>
    </location>
</feature>
<feature type="mutagenesis site" description="Fails to inhibit Spop-mediated ubiquitination and degradation of Brdt." evidence="4">
    <original>C</original>
    <variation>A</variation>
    <location>
        <position position="160"/>
    </location>
</feature>
<feature type="mutagenesis site" description="Abolishes ubiquitination of histone H3." evidence="6">
    <original>S</original>
    <variation>A</variation>
    <location>
        <position position="181"/>
    </location>
</feature>
<feature type="mutagenesis site" description="Abolishes ubiquitination of histone H3." evidence="6">
    <original>Q</original>
    <variation>A</variation>
    <location>
        <position position="206"/>
    </location>
</feature>
<feature type="mutagenesis site" description="Abolishes ubiquitination of histone H3." evidence="6">
    <original>N</original>
    <variation>A</variation>
    <location>
        <position position="208"/>
    </location>
</feature>
<feature type="mutagenesis site" description="Reduces interaction with UBE2D2." evidence="6">
    <original>W</original>
    <variation>A</variation>
    <location>
        <position position="231"/>
    </location>
</feature>
<feature type="mutagenesis site" description="Abolishes interaction with UBE2D2." evidence="6">
    <original>E</original>
    <variation>R</variation>
    <location>
        <position position="232"/>
    </location>
</feature>
<feature type="mutagenesis site" description="Reduces interaction with UBE2D2." evidence="6">
    <original>F</original>
    <variation>A</variation>
    <location>
        <position position="238"/>
    </location>
</feature>
<feature type="mutagenesis site" description="Reduces interaction with UBE2D2." evidence="6">
    <original>Y</original>
    <variation>A</variation>
    <location>
        <position position="242"/>
    </location>
</feature>
<feature type="mutagenesis site" description="Reduces ubiquitination of histone H3." evidence="6">
    <original>Y</original>
    <variation>A</variation>
    <location>
        <position position="245"/>
    </location>
</feature>
<feature type="mutagenesis site" description="Reduces ubiquitination of histone H3." evidence="6">
    <original>F</original>
    <variation>A</variation>
    <location>
        <position position="262"/>
    </location>
</feature>
<feature type="mutagenesis site" description="Reduces ubiquitination of histone H3." evidence="6">
    <original>L</original>
    <variation>A</variation>
    <location>
        <position position="270"/>
    </location>
</feature>
<feature type="turn" evidence="17">
    <location>
        <begin position="34"/>
        <end position="36"/>
    </location>
</feature>
<feature type="helix" evidence="17">
    <location>
        <begin position="43"/>
        <end position="46"/>
    </location>
</feature>
<feature type="strand" evidence="17">
    <location>
        <begin position="49"/>
        <end position="52"/>
    </location>
</feature>
<feature type="strand" evidence="17">
    <location>
        <begin position="55"/>
        <end position="58"/>
    </location>
</feature>
<feature type="helix" evidence="17">
    <location>
        <begin position="59"/>
        <end position="64"/>
    </location>
</feature>
<feature type="turn" evidence="16">
    <location>
        <begin position="75"/>
        <end position="77"/>
    </location>
</feature>
<feature type="helix" evidence="17">
    <location>
        <begin position="83"/>
        <end position="93"/>
    </location>
</feature>
<feature type="turn" evidence="17">
    <location>
        <begin position="99"/>
        <end position="101"/>
    </location>
</feature>
<feature type="strand" evidence="16">
    <location>
        <begin position="108"/>
        <end position="110"/>
    </location>
</feature>
<feature type="helix" evidence="17">
    <location>
        <begin position="121"/>
        <end position="126"/>
    </location>
</feature>
<feature type="turn" evidence="17">
    <location>
        <begin position="135"/>
        <end position="137"/>
    </location>
</feature>
<feature type="helix" evidence="17">
    <location>
        <begin position="142"/>
        <end position="144"/>
    </location>
</feature>
<feature type="turn" evidence="16">
    <location>
        <begin position="155"/>
        <end position="157"/>
    </location>
</feature>
<feature type="turn" evidence="16">
    <location>
        <begin position="161"/>
        <end position="164"/>
    </location>
</feature>
<feature type="strand" evidence="16">
    <location>
        <begin position="173"/>
        <end position="176"/>
    </location>
</feature>
<feature type="strand" evidence="16">
    <location>
        <begin position="178"/>
        <end position="180"/>
    </location>
</feature>
<feature type="strand" evidence="16">
    <location>
        <begin position="184"/>
        <end position="186"/>
    </location>
</feature>
<feature type="helix" evidence="16">
    <location>
        <begin position="187"/>
        <end position="201"/>
    </location>
</feature>
<feature type="turn" evidence="16">
    <location>
        <begin position="205"/>
        <end position="207"/>
    </location>
</feature>
<feature type="helix" evidence="16">
    <location>
        <begin position="212"/>
        <end position="219"/>
    </location>
</feature>
<feature type="turn" evidence="16">
    <location>
        <begin position="230"/>
        <end position="232"/>
    </location>
</feature>
<feature type="turn" evidence="16">
    <location>
        <begin position="235"/>
        <end position="238"/>
    </location>
</feature>
<feature type="strand" evidence="16">
    <location>
        <begin position="239"/>
        <end position="242"/>
    </location>
</feature>
<feature type="strand" evidence="16">
    <location>
        <begin position="250"/>
        <end position="252"/>
    </location>
</feature>
<feature type="strand" evidence="16">
    <location>
        <begin position="263"/>
        <end position="265"/>
    </location>
</feature>
<feature type="helix" evidence="16">
    <location>
        <begin position="266"/>
        <end position="268"/>
    </location>
</feature>
<feature type="strand" evidence="16">
    <location>
        <begin position="269"/>
        <end position="272"/>
    </location>
</feature>
<feature type="strand" evidence="16">
    <location>
        <begin position="274"/>
        <end position="276"/>
    </location>
</feature>
<feature type="strand" evidence="16">
    <location>
        <begin position="280"/>
        <end position="282"/>
    </location>
</feature>
<feature type="helix" evidence="16">
    <location>
        <begin position="283"/>
        <end position="285"/>
    </location>
</feature>
<feature type="turn" evidence="16">
    <location>
        <begin position="290"/>
        <end position="292"/>
    </location>
</feature>
<feature type="turn" evidence="15">
    <location>
        <begin position="298"/>
        <end position="300"/>
    </location>
</feature>
<proteinExistence type="evidence at protein level"/>
<comment type="function">
    <text evidence="1 4 5 6 7">E3 ubiquitin-protein ligase which ubiquitinates histone H3 at 'Lys-14' (PubMed:32726616). Required for male fertility, via inhibition of SPOP-mediated BRDT degradation when in the presence of acetylated histone H4 in early condensing spermatids (PubMed:32726616). Stabilization of BRDT allows it to facilitate histone removal in early condensing spermatids and promote the progression of histone-to-protamine exchange (PubMed:32726616). Promotes the expression of steroidogenesis proteins in the testes, and as a result plays a role in maintaining testosterone levels and repressing osteoclastogenesis (PubMed:38430697). Promotes transcription of cardiac enhancer genes by facilitating binding of cardiac transcription factors such as MEF2C and GATA4 to target gene promoters (PubMed:33941892). Ubiquitinates histone H4 (By similarity). Ubiquitinates histone H2A and H3 as part of the nucleosome core particle (PubMed:37993255).</text>
</comment>
<comment type="catalytic activity">
    <reaction evidence="4 6">
        <text>S-ubiquitinyl-[E2 ubiquitin-conjugating enzyme]-L-cysteine + [acceptor protein]-L-lysine = [E2 ubiquitin-conjugating enzyme]-L-cysteine + N(6)-ubiquitinyl-[acceptor protein]-L-lysine.</text>
        <dbReference type="EC" id="2.3.2.27"/>
    </reaction>
</comment>
<comment type="pathway">
    <text evidence="4">Protein modification; protein ubiquitination.</text>
</comment>
<comment type="subunit">
    <text evidence="5 6">Interacts with MEF2C; the interaction promotes MEF2C binding to its transcription targets (PubMed:33941892). Interacts with GATA4; the interaction promotes GATA4 binding to its transcription targets (PubMed:33941892). Interacts with UBE2D2; the interaction inhibits cleavage of PHF7 and promotes association of the complex with the nucleosome core particle (PubMed:37993255).</text>
</comment>
<comment type="subcellular location">
    <subcellularLocation>
        <location evidence="1">Nucleus</location>
    </subcellularLocation>
</comment>
<comment type="alternative products">
    <event type="alternative splicing"/>
    <isoform>
        <id>Q9DAG9-1</id>
        <name>1</name>
        <sequence type="displayed"/>
    </isoform>
    <isoform>
        <id>Q9DAG9-2</id>
        <name>2</name>
        <sequence type="described" ref="VSP_013491"/>
    </isoform>
</comment>
<comment type="tissue specificity">
    <text evidence="3 7">Expressed in Leydig cells and in developing spermatids (at protein level) (PubMed:38430697). Highly expressed in Sertoli cells in testis (PubMed:11829468).</text>
</comment>
<comment type="developmental stage">
    <text evidence="3 4 5">Expressed in early cardiac progenitor cells at 6.5 to 7.5 dpc (at protein level) (PubMed:33941892). Expressed in elongating spermatids from 28 days postpartum (dpp) (at protein level) (PubMed:32726616). Expressed in round spermatids from 21 dpp (PubMed:32726616). Expression levels increase during the first 4 weeks after birth and remain constant during the following 3 weeks (PubMed:11829468).</text>
</comment>
<comment type="domain">
    <text evidence="6">The extended PHD (ePHD) domain is required for interaction with the nucleosome core particle via binding to DNA.</text>
</comment>
<comment type="domain">
    <text evidence="6">The C-terminal PHD domain is required for histone H3 substrate binding.</text>
</comment>
<comment type="domain">
    <text evidence="6">The RING, Linker and PHD domains act as a combined interaction interface for UBE2D2.</text>
</comment>
<comment type="disruption phenotype">
    <text evidence="4 7">Knockout mice are born at the expected Mendelian rate, however male mice show significant growth retardation from 4 weeks of age (PubMed:38430697). Overall decrease in body weight is due to reduced bone mineral content, bone mineral density and bone area (PubMed:38430697). Decrease in steroidogenesis markers and a resulting decrease in testosterone and dihydrotestosterone in the testes (PubMed:38430697). This results in an increase in the number of osteoclasts and adipocytes and overall increase in osteoclastogenesis (PubMed:38430697). Testes conditional-knockout male mice are infertile (PubMed:32726616). Decreased numbers of sperm in tubules of the epididymis and sperm show reduced motility (PubMed:32726616). Morphologically sperm have a more globular and larger head with nuclei, indicating less condensed chromatin in the sperm head (PubMed:32726616). Increased histone and Prm1 levels, decrease in Prm2 expression, indicating retention of histones in condensed spermatids (PubMed:32726616). Aberrant increase in histone H4 acetylation beyond step 12 spermatids of stage 12 tubules when histone H4 acetylation should be decreasing (PubMed:32726616). Decrease in Brdt expression in step 11 and 12 spermatids (PubMed:32726616).</text>
</comment>